<organism>
    <name type="scientific">Methanothermobacter thermautotrophicus (strain ATCC 29096 / DSM 1053 / JCM 10044 / NBRC 100330 / Delta H)</name>
    <name type="common">Methanobacterium thermoautotrophicum</name>
    <dbReference type="NCBI Taxonomy" id="187420"/>
    <lineage>
        <taxon>Archaea</taxon>
        <taxon>Methanobacteriati</taxon>
        <taxon>Methanobacteriota</taxon>
        <taxon>Methanomada group</taxon>
        <taxon>Methanobacteria</taxon>
        <taxon>Methanobacteriales</taxon>
        <taxon>Methanobacteriaceae</taxon>
        <taxon>Methanothermobacter</taxon>
    </lineage>
</organism>
<comment type="function">
    <text evidence="3">Binds and compacts DNA (95 to 150 base pairs) to form nucleosome-like structures that contain positive DNA supercoils.</text>
</comment>
<comment type="subunit">
    <text evidence="2 6">Homodimer or heterodimer with HmtB (PubMed:1459937). Dimers then assemble into higher oligomers, with the DNA wrapped around the protein core (By similarity).</text>
</comment>
<comment type="subcellular location">
    <subcellularLocation>
        <location evidence="6">Cytoplasm</location>
    </subcellularLocation>
    <subcellularLocation>
        <location evidence="6">Chromosome</location>
    </subcellularLocation>
</comment>
<comment type="similarity">
    <text evidence="5">Belongs to the archaeal histone HMF family.</text>
</comment>
<dbReference type="EMBL" id="M90086">
    <property type="protein sequence ID" value="AAA73227.1"/>
    <property type="molecule type" value="Genomic_DNA"/>
</dbReference>
<dbReference type="EMBL" id="AE000666">
    <property type="protein sequence ID" value="AAB85321.1"/>
    <property type="molecule type" value="Genomic_DNA"/>
</dbReference>
<dbReference type="PIR" id="G69209">
    <property type="entry name" value="G69209"/>
</dbReference>
<dbReference type="RefSeq" id="WP_010876456.1">
    <property type="nucleotide sequence ID" value="NC_000916.1"/>
</dbReference>
<dbReference type="SMR" id="P50483"/>
<dbReference type="FunCoup" id="P50483">
    <property type="interactions" value="2"/>
</dbReference>
<dbReference type="STRING" id="187420.MTH_821"/>
<dbReference type="PaxDb" id="187420-MTH_821"/>
<dbReference type="EnsemblBacteria" id="AAB85321">
    <property type="protein sequence ID" value="AAB85321"/>
    <property type="gene ID" value="MTH_821"/>
</dbReference>
<dbReference type="GeneID" id="82297273"/>
<dbReference type="KEGG" id="mth:MTH_821"/>
<dbReference type="PATRIC" id="fig|187420.15.peg.806"/>
<dbReference type="HOGENOM" id="CLU_192667_0_0_2"/>
<dbReference type="InParanoid" id="P50483"/>
<dbReference type="Proteomes" id="UP000005223">
    <property type="component" value="Chromosome"/>
</dbReference>
<dbReference type="GO" id="GO:0005694">
    <property type="term" value="C:chromosome"/>
    <property type="evidence" value="ECO:0007669"/>
    <property type="project" value="UniProtKB-SubCell"/>
</dbReference>
<dbReference type="GO" id="GO:0005737">
    <property type="term" value="C:cytoplasm"/>
    <property type="evidence" value="ECO:0007669"/>
    <property type="project" value="UniProtKB-SubCell"/>
</dbReference>
<dbReference type="GO" id="GO:0003677">
    <property type="term" value="F:DNA binding"/>
    <property type="evidence" value="ECO:0007669"/>
    <property type="project" value="UniProtKB-KW"/>
</dbReference>
<dbReference type="GO" id="GO:0046982">
    <property type="term" value="F:protein heterodimerization activity"/>
    <property type="evidence" value="ECO:0007669"/>
    <property type="project" value="InterPro"/>
</dbReference>
<dbReference type="CDD" id="cd22909">
    <property type="entry name" value="HFD_archaea_histone-like"/>
    <property type="match status" value="1"/>
</dbReference>
<dbReference type="Gene3D" id="1.10.20.10">
    <property type="entry name" value="Histone, subunit A"/>
    <property type="match status" value="1"/>
</dbReference>
<dbReference type="InterPro" id="IPR050947">
    <property type="entry name" value="Archaeal_histone_HMF"/>
</dbReference>
<dbReference type="InterPro" id="IPR003958">
    <property type="entry name" value="CBFA_NFYB_domain"/>
</dbReference>
<dbReference type="InterPro" id="IPR009072">
    <property type="entry name" value="Histone-fold"/>
</dbReference>
<dbReference type="InterPro" id="IPR050004">
    <property type="entry name" value="HmfB-like"/>
</dbReference>
<dbReference type="NCBIfam" id="NF043032">
    <property type="entry name" value="archaea_histone"/>
    <property type="match status" value="1"/>
</dbReference>
<dbReference type="PANTHER" id="PTHR47828">
    <property type="entry name" value="ARCHAEAL HISTONE A"/>
    <property type="match status" value="1"/>
</dbReference>
<dbReference type="PANTHER" id="PTHR47828:SF1">
    <property type="entry name" value="ARCHAEAL HISTONE A"/>
    <property type="match status" value="1"/>
</dbReference>
<dbReference type="Pfam" id="PF00808">
    <property type="entry name" value="CBFD_NFYB_HMF"/>
    <property type="match status" value="1"/>
</dbReference>
<dbReference type="SUPFAM" id="SSF47113">
    <property type="entry name" value="Histone-fold"/>
    <property type="match status" value="1"/>
</dbReference>
<reference key="1">
    <citation type="journal article" date="1992" name="J. Bacteriol.">
        <title>HMt, a histone-related protein from Methanobacterium thermoautotrophicum delta H.</title>
        <authorList>
            <person name="Tabassum R."/>
            <person name="Sandman K.M."/>
            <person name="Reeve J.N."/>
        </authorList>
    </citation>
    <scope>NUCLEOTIDE SEQUENCE [GENOMIC DNA]</scope>
    <scope>FUNCTION</scope>
    <scope>SUBCELLULAR LOCATION</scope>
    <scope>SUBUNIT</scope>
    <source>
        <strain>ATCC 29096 / DSM 1053 / JCM 10044 / NBRC 100330 / Delta H</strain>
    </source>
</reference>
<reference key="2">
    <citation type="journal article" date="1997" name="J. Bacteriol.">
        <title>Complete genome sequence of Methanobacterium thermoautotrophicum deltaH: functional analysis and comparative genomics.</title>
        <authorList>
            <person name="Smith D.R."/>
            <person name="Doucette-Stamm L.A."/>
            <person name="Deloughery C."/>
            <person name="Lee H.-M."/>
            <person name="Dubois J."/>
            <person name="Aldredge T."/>
            <person name="Bashirzadeh R."/>
            <person name="Blakely D."/>
            <person name="Cook R."/>
            <person name="Gilbert K."/>
            <person name="Harrison D."/>
            <person name="Hoang L."/>
            <person name="Keagle P."/>
            <person name="Lumm W."/>
            <person name="Pothier B."/>
            <person name="Qiu D."/>
            <person name="Spadafora R."/>
            <person name="Vicare R."/>
            <person name="Wang Y."/>
            <person name="Wierzbowski J."/>
            <person name="Gibson R."/>
            <person name="Jiwani N."/>
            <person name="Caruso A."/>
            <person name="Bush D."/>
            <person name="Safer H."/>
            <person name="Patwell D."/>
            <person name="Prabhakar S."/>
            <person name="McDougall S."/>
            <person name="Shimer G."/>
            <person name="Goyal A."/>
            <person name="Pietrovski S."/>
            <person name="Church G.M."/>
            <person name="Daniels C.J."/>
            <person name="Mao J.-I."/>
            <person name="Rice P."/>
            <person name="Noelling J."/>
            <person name="Reeve J.N."/>
        </authorList>
    </citation>
    <scope>NUCLEOTIDE SEQUENCE [LARGE SCALE GENOMIC DNA]</scope>
    <source>
        <strain>ATCC 29096 / DSM 1053 / JCM 10044 / NBRC 100330 / Delta H</strain>
    </source>
</reference>
<accession>P50483</accession>
<name>HMT1_METTH</name>
<sequence>MAELPIAPVGRIIKNAGAQRISDDAKEALAKALEEMGEEISRKAVELAKHAGRKTVKATDIEMAAKQL</sequence>
<protein>
    <recommendedName>
        <fullName>DNA-binding protein HMt-1.1</fullName>
    </recommendedName>
    <alternativeName>
        <fullName>Archaeal histone A1</fullName>
    </alternativeName>
</protein>
<gene>
    <name type="primary">hmtA1</name>
    <name evidence="4" type="synonym">hmtA</name>
    <name type="ordered locus">MTH_821</name>
</gene>
<proteinExistence type="evidence at protein level"/>
<evidence type="ECO:0000250" key="1"/>
<evidence type="ECO:0000250" key="2">
    <source>
        <dbReference type="UniProtKB" id="P19267"/>
    </source>
</evidence>
<evidence type="ECO:0000269" key="3">
    <source>
    </source>
</evidence>
<evidence type="ECO:0000303" key="4">
    <source>
    </source>
</evidence>
<evidence type="ECO:0000305" key="5"/>
<evidence type="ECO:0000305" key="6">
    <source>
    </source>
</evidence>
<keyword id="KW-0158">Chromosome</keyword>
<keyword id="KW-0963">Cytoplasm</keyword>
<keyword id="KW-0238">DNA-binding</keyword>
<keyword id="KW-1185">Reference proteome</keyword>
<feature type="initiator methionine" description="Removed" evidence="1">
    <location>
        <position position="1"/>
    </location>
</feature>
<feature type="chain" id="PRO_0000154991" description="DNA-binding protein HMt-1.1">
    <location>
        <begin position="2"/>
        <end position="68"/>
    </location>
</feature>
<feature type="region of interest" description="Interaction with DNA" evidence="2">
    <location>
        <begin position="20"/>
        <end position="22"/>
    </location>
</feature>
<feature type="region of interest" description="Interaction with DNA" evidence="2">
    <location>
        <begin position="54"/>
        <end position="57"/>
    </location>
</feature>
<feature type="site" description="Interaction with DNA" evidence="2">
    <location>
        <position position="14"/>
    </location>
</feature>